<protein>
    <recommendedName>
        <fullName evidence="1">N-acetylneuraminate lyase</fullName>
        <shortName evidence="1">NAL</shortName>
        <shortName evidence="1">Neu5Ac lyase</shortName>
        <ecNumber evidence="1">4.1.3.3</ecNumber>
    </recommendedName>
    <alternativeName>
        <fullName evidence="1">N-acetylneuraminate pyruvate-lyase</fullName>
    </alternativeName>
    <alternativeName>
        <fullName evidence="1">N-acetylneuraminic acid aldolase</fullName>
    </alternativeName>
    <alternativeName>
        <fullName evidence="1">Sialate lyase</fullName>
    </alternativeName>
    <alternativeName>
        <fullName evidence="1">Sialic acid aldolase</fullName>
    </alternativeName>
    <alternativeName>
        <fullName evidence="1">Sialic acid lyase</fullName>
    </alternativeName>
</protein>
<comment type="function">
    <text evidence="1">Catalyzes the reversible aldol cleavage of N-acetylneuraminic acid (sialic acid; Neu5Ac) to form pyruvate and N-acetylmannosamine (ManNAc) via a Schiff base intermediate.</text>
</comment>
<comment type="catalytic activity">
    <reaction evidence="1">
        <text>aceneuramate = aldehydo-N-acetyl-D-mannosamine + pyruvate</text>
        <dbReference type="Rhea" id="RHEA:23296"/>
        <dbReference type="ChEBI" id="CHEBI:15361"/>
        <dbReference type="ChEBI" id="CHEBI:17122"/>
        <dbReference type="ChEBI" id="CHEBI:173083"/>
        <dbReference type="EC" id="4.1.3.3"/>
    </reaction>
</comment>
<comment type="pathway">
    <text evidence="1">Amino-sugar metabolism; N-acetylneuraminate degradation; D-fructose 6-phosphate from N-acetylneuraminate: step 1/5.</text>
</comment>
<comment type="subunit">
    <text evidence="1">Homotetramer.</text>
</comment>
<comment type="subcellular location">
    <subcellularLocation>
        <location evidence="1">Cytoplasm</location>
    </subcellularLocation>
</comment>
<comment type="similarity">
    <text evidence="1">Belongs to the DapA family. NanA subfamily.</text>
</comment>
<keyword id="KW-0119">Carbohydrate metabolism</keyword>
<keyword id="KW-0963">Cytoplasm</keyword>
<keyword id="KW-0456">Lyase</keyword>
<keyword id="KW-0704">Schiff base</keyword>
<gene>
    <name evidence="1" type="primary">nanA</name>
    <name type="ordered locus">HS_0695</name>
</gene>
<organism>
    <name type="scientific">Histophilus somni (strain 129Pt)</name>
    <name type="common">Haemophilus somnus</name>
    <dbReference type="NCBI Taxonomy" id="205914"/>
    <lineage>
        <taxon>Bacteria</taxon>
        <taxon>Pseudomonadati</taxon>
        <taxon>Pseudomonadota</taxon>
        <taxon>Gammaproteobacteria</taxon>
        <taxon>Pasteurellales</taxon>
        <taxon>Pasteurellaceae</taxon>
        <taxon>Histophilus</taxon>
    </lineage>
</organism>
<reference key="1">
    <citation type="journal article" date="2007" name="J. Bacteriol.">
        <title>Complete genome sequence of Haemophilus somnus (Histophilus somni) strain 129Pt and comparison to Haemophilus ducreyi 35000HP and Haemophilus influenzae Rd.</title>
        <authorList>
            <person name="Challacombe J.F."/>
            <person name="Duncan A.J."/>
            <person name="Brettin T.S."/>
            <person name="Bruce D."/>
            <person name="Chertkov O."/>
            <person name="Detter J.C."/>
            <person name="Han C.S."/>
            <person name="Misra M."/>
            <person name="Richardson P."/>
            <person name="Tapia R."/>
            <person name="Thayer N."/>
            <person name="Xie G."/>
            <person name="Inzana T.J."/>
        </authorList>
    </citation>
    <scope>NUCLEOTIDE SEQUENCE [LARGE SCALE GENOMIC DNA]</scope>
    <source>
        <strain>129Pt</strain>
    </source>
</reference>
<accession>Q0I2T8</accession>
<sequence>MKNLKGIFSALLVSFNEDGSINEKGLREIVRYNIDKMKIDGLYVGGSTGENFMLSTAEKKEIFRIAKEEAKDQVALIAQVGSVNLHEAVELGKYATELGYDSLSAVTPFYYKFSFAEIKHYYETIIAETGNNMIVYSIPFLTGVNMGVEQFGELYANPKVLGVKFTAGDFYLLERLKKAYPNHLVWAGFDEMMLPAVSLGVDGAIGSTFNVNGLRARQIFELAKAGKVAEALEIQHVTNDLIEGILANGLYLTIKEILKLQGVNAGYCREPMTAKATEKQLAVAKELKEKFL</sequence>
<evidence type="ECO:0000255" key="1">
    <source>
        <dbReference type="HAMAP-Rule" id="MF_01237"/>
    </source>
</evidence>
<proteinExistence type="inferred from homology"/>
<feature type="chain" id="PRO_1000066929" description="N-acetylneuraminate lyase">
    <location>
        <begin position="1"/>
        <end position="292"/>
    </location>
</feature>
<feature type="active site" description="Proton donor" evidence="1">
    <location>
        <position position="136"/>
    </location>
</feature>
<feature type="active site" description="Schiff-base intermediate with substrate" evidence="1">
    <location>
        <position position="164"/>
    </location>
</feature>
<feature type="binding site" evidence="1">
    <location>
        <position position="47"/>
    </location>
    <ligand>
        <name>aceneuramate</name>
        <dbReference type="ChEBI" id="CHEBI:173083"/>
    </ligand>
</feature>
<feature type="binding site" evidence="1">
    <location>
        <position position="48"/>
    </location>
    <ligand>
        <name>aceneuramate</name>
        <dbReference type="ChEBI" id="CHEBI:173083"/>
    </ligand>
</feature>
<feature type="binding site" evidence="1">
    <location>
        <position position="166"/>
    </location>
    <ligand>
        <name>aceneuramate</name>
        <dbReference type="ChEBI" id="CHEBI:173083"/>
    </ligand>
</feature>
<feature type="binding site" evidence="1">
    <location>
        <position position="188"/>
    </location>
    <ligand>
        <name>aceneuramate</name>
        <dbReference type="ChEBI" id="CHEBI:173083"/>
    </ligand>
</feature>
<feature type="binding site" evidence="1">
    <location>
        <position position="190"/>
    </location>
    <ligand>
        <name>aceneuramate</name>
        <dbReference type="ChEBI" id="CHEBI:173083"/>
    </ligand>
</feature>
<feature type="binding site" evidence="1">
    <location>
        <position position="191"/>
    </location>
    <ligand>
        <name>aceneuramate</name>
        <dbReference type="ChEBI" id="CHEBI:173083"/>
    </ligand>
</feature>
<feature type="binding site" evidence="1">
    <location>
        <position position="207"/>
    </location>
    <ligand>
        <name>aceneuramate</name>
        <dbReference type="ChEBI" id="CHEBI:173083"/>
    </ligand>
</feature>
<dbReference type="EC" id="4.1.3.3" evidence="1"/>
<dbReference type="EMBL" id="CP000436">
    <property type="protein sequence ID" value="ABI24972.1"/>
    <property type="molecule type" value="Genomic_DNA"/>
</dbReference>
<dbReference type="SMR" id="Q0I2T8"/>
<dbReference type="KEGG" id="hso:HS_0695"/>
<dbReference type="eggNOG" id="COG0329">
    <property type="taxonomic scope" value="Bacteria"/>
</dbReference>
<dbReference type="HOGENOM" id="CLU_049343_6_0_6"/>
<dbReference type="UniPathway" id="UPA00629">
    <property type="reaction ID" value="UER00680"/>
</dbReference>
<dbReference type="GO" id="GO:0005829">
    <property type="term" value="C:cytosol"/>
    <property type="evidence" value="ECO:0007669"/>
    <property type="project" value="TreeGrafter"/>
</dbReference>
<dbReference type="GO" id="GO:0008747">
    <property type="term" value="F:N-acetylneuraminate lyase activity"/>
    <property type="evidence" value="ECO:0007669"/>
    <property type="project" value="UniProtKB-UniRule"/>
</dbReference>
<dbReference type="GO" id="GO:0005975">
    <property type="term" value="P:carbohydrate metabolic process"/>
    <property type="evidence" value="ECO:0007669"/>
    <property type="project" value="UniProtKB-UniRule"/>
</dbReference>
<dbReference type="GO" id="GO:0019262">
    <property type="term" value="P:N-acetylneuraminate catabolic process"/>
    <property type="evidence" value="ECO:0007669"/>
    <property type="project" value="UniProtKB-UniRule"/>
</dbReference>
<dbReference type="CDD" id="cd00954">
    <property type="entry name" value="NAL"/>
    <property type="match status" value="1"/>
</dbReference>
<dbReference type="FunFam" id="3.20.20.70:FF:000039">
    <property type="entry name" value="N-acetylneuraminate lyase"/>
    <property type="match status" value="1"/>
</dbReference>
<dbReference type="Gene3D" id="3.20.20.70">
    <property type="entry name" value="Aldolase class I"/>
    <property type="match status" value="1"/>
</dbReference>
<dbReference type="HAMAP" id="MF_01237">
    <property type="entry name" value="N_acetylneuram_lyase"/>
    <property type="match status" value="1"/>
</dbReference>
<dbReference type="InterPro" id="IPR013785">
    <property type="entry name" value="Aldolase_TIM"/>
</dbReference>
<dbReference type="InterPro" id="IPR002220">
    <property type="entry name" value="DapA-like"/>
</dbReference>
<dbReference type="InterPro" id="IPR005264">
    <property type="entry name" value="NanA"/>
</dbReference>
<dbReference type="InterPro" id="IPR020625">
    <property type="entry name" value="Schiff_base-form_aldolases_AS"/>
</dbReference>
<dbReference type="InterPro" id="IPR020624">
    <property type="entry name" value="Schiff_base-form_aldolases_CS"/>
</dbReference>
<dbReference type="NCBIfam" id="TIGR00683">
    <property type="entry name" value="nanA"/>
    <property type="match status" value="1"/>
</dbReference>
<dbReference type="NCBIfam" id="NF003164">
    <property type="entry name" value="PRK04147.1"/>
    <property type="match status" value="1"/>
</dbReference>
<dbReference type="PANTHER" id="PTHR42849">
    <property type="entry name" value="N-ACETYLNEURAMINATE LYASE"/>
    <property type="match status" value="1"/>
</dbReference>
<dbReference type="PANTHER" id="PTHR42849:SF1">
    <property type="entry name" value="N-ACETYLNEURAMINATE LYASE"/>
    <property type="match status" value="1"/>
</dbReference>
<dbReference type="Pfam" id="PF00701">
    <property type="entry name" value="DHDPS"/>
    <property type="match status" value="1"/>
</dbReference>
<dbReference type="PIRSF" id="PIRSF001365">
    <property type="entry name" value="DHDPS"/>
    <property type="match status" value="1"/>
</dbReference>
<dbReference type="PRINTS" id="PR00146">
    <property type="entry name" value="DHPICSNTHASE"/>
</dbReference>
<dbReference type="SMART" id="SM01130">
    <property type="entry name" value="DHDPS"/>
    <property type="match status" value="1"/>
</dbReference>
<dbReference type="SUPFAM" id="SSF51569">
    <property type="entry name" value="Aldolase"/>
    <property type="match status" value="1"/>
</dbReference>
<dbReference type="PROSITE" id="PS00665">
    <property type="entry name" value="DHDPS_1"/>
    <property type="match status" value="1"/>
</dbReference>
<dbReference type="PROSITE" id="PS00666">
    <property type="entry name" value="DHDPS_2"/>
    <property type="match status" value="1"/>
</dbReference>
<name>NANA_HISS1</name>